<name>SRP54_METS3</name>
<protein>
    <recommendedName>
        <fullName evidence="1">Signal recognition particle 54 kDa protein</fullName>
        <shortName evidence="1">SRP54</shortName>
        <ecNumber evidence="1">3.6.5.4</ecNumber>
    </recommendedName>
</protein>
<gene>
    <name evidence="1" type="primary">srp54</name>
    <name type="ordered locus">Msm_1360</name>
</gene>
<evidence type="ECO:0000255" key="1">
    <source>
        <dbReference type="HAMAP-Rule" id="MF_00306"/>
    </source>
</evidence>
<evidence type="ECO:0000305" key="2"/>
<reference key="1">
    <citation type="journal article" date="2007" name="Proc. Natl. Acad. Sci. U.S.A.">
        <title>Genomic and metabolic adaptations of Methanobrevibacter smithii to the human gut.</title>
        <authorList>
            <person name="Samuel B.S."/>
            <person name="Hansen E.E."/>
            <person name="Manchester J.K."/>
            <person name="Coutinho P.M."/>
            <person name="Henrissat B."/>
            <person name="Fulton R."/>
            <person name="Latreille P."/>
            <person name="Kim K."/>
            <person name="Wilson R.K."/>
            <person name="Gordon J.I."/>
        </authorList>
    </citation>
    <scope>NUCLEOTIDE SEQUENCE [LARGE SCALE GENOMIC DNA]</scope>
    <source>
        <strain>ATCC 35061 / DSM 861 / OCM 144 / PS</strain>
    </source>
</reference>
<accession>A5UMY7</accession>
<dbReference type="EC" id="3.6.5.4" evidence="1"/>
<dbReference type="EMBL" id="CP000678">
    <property type="protein sequence ID" value="ABQ87565.1"/>
    <property type="status" value="ALT_INIT"/>
    <property type="molecule type" value="Genomic_DNA"/>
</dbReference>
<dbReference type="SMR" id="A5UMY7"/>
<dbReference type="STRING" id="420247.Msm_1360"/>
<dbReference type="EnsemblBacteria" id="ABQ87565">
    <property type="protein sequence ID" value="ABQ87565"/>
    <property type="gene ID" value="Msm_1360"/>
</dbReference>
<dbReference type="KEGG" id="msi:Msm_1360"/>
<dbReference type="PATRIC" id="fig|420247.28.peg.1355"/>
<dbReference type="eggNOG" id="arCOG01228">
    <property type="taxonomic scope" value="Archaea"/>
</dbReference>
<dbReference type="HOGENOM" id="CLU_009301_6_0_2"/>
<dbReference type="Proteomes" id="UP000001992">
    <property type="component" value="Chromosome"/>
</dbReference>
<dbReference type="GO" id="GO:0048500">
    <property type="term" value="C:signal recognition particle"/>
    <property type="evidence" value="ECO:0007669"/>
    <property type="project" value="UniProtKB-UniRule"/>
</dbReference>
<dbReference type="GO" id="GO:0008312">
    <property type="term" value="F:7S RNA binding"/>
    <property type="evidence" value="ECO:0007669"/>
    <property type="project" value="UniProtKB-UniRule"/>
</dbReference>
<dbReference type="GO" id="GO:0016887">
    <property type="term" value="F:ATP hydrolysis activity"/>
    <property type="evidence" value="ECO:0007669"/>
    <property type="project" value="InterPro"/>
</dbReference>
<dbReference type="GO" id="GO:0005525">
    <property type="term" value="F:GTP binding"/>
    <property type="evidence" value="ECO:0007669"/>
    <property type="project" value="UniProtKB-UniRule"/>
</dbReference>
<dbReference type="GO" id="GO:0003924">
    <property type="term" value="F:GTPase activity"/>
    <property type="evidence" value="ECO:0007669"/>
    <property type="project" value="UniProtKB-UniRule"/>
</dbReference>
<dbReference type="GO" id="GO:0006614">
    <property type="term" value="P:SRP-dependent cotranslational protein targeting to membrane"/>
    <property type="evidence" value="ECO:0007669"/>
    <property type="project" value="InterPro"/>
</dbReference>
<dbReference type="CDD" id="cd17875">
    <property type="entry name" value="SRP54_G"/>
    <property type="match status" value="1"/>
</dbReference>
<dbReference type="FunFam" id="3.40.50.300:FF:000022">
    <property type="entry name" value="Signal recognition particle 54 kDa subunit"/>
    <property type="match status" value="1"/>
</dbReference>
<dbReference type="Gene3D" id="3.40.50.300">
    <property type="entry name" value="P-loop containing nucleotide triphosphate hydrolases"/>
    <property type="match status" value="1"/>
</dbReference>
<dbReference type="Gene3D" id="1.20.120.140">
    <property type="entry name" value="Signal recognition particle SRP54, nucleotide-binding domain"/>
    <property type="match status" value="1"/>
</dbReference>
<dbReference type="Gene3D" id="1.10.260.30">
    <property type="entry name" value="Signal recognition particle, SRP54 subunit, M-domain"/>
    <property type="match status" value="1"/>
</dbReference>
<dbReference type="HAMAP" id="MF_00306">
    <property type="entry name" value="SRP54"/>
    <property type="match status" value="1"/>
</dbReference>
<dbReference type="InterPro" id="IPR003593">
    <property type="entry name" value="AAA+_ATPase"/>
</dbReference>
<dbReference type="InterPro" id="IPR027417">
    <property type="entry name" value="P-loop_NTPase"/>
</dbReference>
<dbReference type="InterPro" id="IPR036891">
    <property type="entry name" value="Signal_recog_part_SRP54_M_sf"/>
</dbReference>
<dbReference type="InterPro" id="IPR013822">
    <property type="entry name" value="Signal_recog_particl_SRP54_hlx"/>
</dbReference>
<dbReference type="InterPro" id="IPR004125">
    <property type="entry name" value="Signal_recog_particle_SRP54_M"/>
</dbReference>
<dbReference type="InterPro" id="IPR036225">
    <property type="entry name" value="SRP/SRP_N"/>
</dbReference>
<dbReference type="InterPro" id="IPR022941">
    <property type="entry name" value="SRP54"/>
</dbReference>
<dbReference type="InterPro" id="IPR000897">
    <property type="entry name" value="SRP54_GTPase_dom"/>
</dbReference>
<dbReference type="InterPro" id="IPR042101">
    <property type="entry name" value="SRP54_N_sf"/>
</dbReference>
<dbReference type="PANTHER" id="PTHR11564">
    <property type="entry name" value="SIGNAL RECOGNITION PARTICLE 54K PROTEIN SRP54"/>
    <property type="match status" value="1"/>
</dbReference>
<dbReference type="PANTHER" id="PTHR11564:SF5">
    <property type="entry name" value="SIGNAL RECOGNITION PARTICLE SUBUNIT SRP54"/>
    <property type="match status" value="1"/>
</dbReference>
<dbReference type="Pfam" id="PF00448">
    <property type="entry name" value="SRP54"/>
    <property type="match status" value="1"/>
</dbReference>
<dbReference type="Pfam" id="PF02881">
    <property type="entry name" value="SRP54_N"/>
    <property type="match status" value="1"/>
</dbReference>
<dbReference type="Pfam" id="PF02978">
    <property type="entry name" value="SRP_SPB"/>
    <property type="match status" value="1"/>
</dbReference>
<dbReference type="SMART" id="SM00382">
    <property type="entry name" value="AAA"/>
    <property type="match status" value="1"/>
</dbReference>
<dbReference type="SMART" id="SM00962">
    <property type="entry name" value="SRP54"/>
    <property type="match status" value="1"/>
</dbReference>
<dbReference type="SMART" id="SM00963">
    <property type="entry name" value="SRP54_N"/>
    <property type="match status" value="1"/>
</dbReference>
<dbReference type="SUPFAM" id="SSF47364">
    <property type="entry name" value="Domain of the SRP/SRP receptor G-proteins"/>
    <property type="match status" value="1"/>
</dbReference>
<dbReference type="SUPFAM" id="SSF52540">
    <property type="entry name" value="P-loop containing nucleoside triphosphate hydrolases"/>
    <property type="match status" value="1"/>
</dbReference>
<dbReference type="SUPFAM" id="SSF47446">
    <property type="entry name" value="Signal peptide-binding domain"/>
    <property type="match status" value="1"/>
</dbReference>
<dbReference type="PROSITE" id="PS00300">
    <property type="entry name" value="SRP54"/>
    <property type="match status" value="1"/>
</dbReference>
<proteinExistence type="inferred from homology"/>
<sequence length="445" mass="49466">MLGNLGENLTKTMKKLVGISVIDKKTIEEVVKEIQRALIQSDVNIALVLDLSKKIKKRALEEEPPKGITPREHVITIIYEEMVNLLGGEAPGLDIDVKPYKILFLGLQGSGKTTTIGKLCRYLQKKGFNPAVVCTDTWRPAAYEQLRQLTEEMQVPLYGDPDNKDALDLAQKGLKEFKNRKVIIFDTAGRHKQEEDLIAEMDTLDDIIQPTESILVIDGTIGQQAGEQAKAFSQATDVGSIIITKLDGSAKGGGAMSAVAETGAPIKFIGTGERIDDFELFDPARFISRLLGMGDIQTLIEKAEDSIDEDMAEKTMKNMMSGKFTLVDMKNQFEMMNSMGPMQQVLSMIPGLGNKVSKEASKMTEDKIDGYKVIMSSMTKKEMENPKLIKQSRIRRIAMGAGVEESEVRDLLKYYNNTKKTMKGIGKRGRFGNNSMNRMMGQFMK</sequence>
<comment type="function">
    <text evidence="1">Involved in targeting and insertion of nascent membrane proteins into the cytoplasmic membrane. Binds to the hydrophobic signal sequence of the ribosome-nascent chain (RNC) as it emerges from the ribosomes. The SRP-RNC complex is then targeted to the cytoplasmic membrane where it interacts with the SRP receptor FtsY.</text>
</comment>
<comment type="catalytic activity">
    <reaction evidence="1">
        <text>GTP + H2O = GDP + phosphate + H(+)</text>
        <dbReference type="Rhea" id="RHEA:19669"/>
        <dbReference type="ChEBI" id="CHEBI:15377"/>
        <dbReference type="ChEBI" id="CHEBI:15378"/>
        <dbReference type="ChEBI" id="CHEBI:37565"/>
        <dbReference type="ChEBI" id="CHEBI:43474"/>
        <dbReference type="ChEBI" id="CHEBI:58189"/>
        <dbReference type="EC" id="3.6.5.4"/>
    </reaction>
</comment>
<comment type="subunit">
    <text evidence="1">Part of the signal recognition particle protein translocation system, which is composed of SRP and FtsY. Archaeal SRP consists of a 7S RNA molecule of 300 nucleotides and two protein subunits: SRP54 and SRP19.</text>
</comment>
<comment type="subcellular location">
    <subcellularLocation>
        <location evidence="1">Cytoplasm</location>
    </subcellularLocation>
    <text evidence="1">The SRP-RNC complex is targeted to the cytoplasmic membrane.</text>
</comment>
<comment type="domain">
    <text evidence="1">Composed of three domains: the N-terminal N domain, which is responsible for interactions with the ribosome, the central G domain, which binds GTP, and the C-terminal M domain, which binds the RNA and the signal sequence of the RNC.</text>
</comment>
<comment type="similarity">
    <text evidence="1">Belongs to the GTP-binding SRP family. SRP54 subfamily.</text>
</comment>
<comment type="sequence caution" evidence="2">
    <conflict type="erroneous initiation">
        <sequence resource="EMBL-CDS" id="ABQ87565"/>
    </conflict>
</comment>
<keyword id="KW-0963">Cytoplasm</keyword>
<keyword id="KW-0342">GTP-binding</keyword>
<keyword id="KW-0378">Hydrolase</keyword>
<keyword id="KW-0547">Nucleotide-binding</keyword>
<keyword id="KW-0687">Ribonucleoprotein</keyword>
<keyword id="KW-0694">RNA-binding</keyword>
<keyword id="KW-0733">Signal recognition particle</keyword>
<feature type="chain" id="PRO_0000322243" description="Signal recognition particle 54 kDa protein">
    <location>
        <begin position="1"/>
        <end position="445"/>
    </location>
</feature>
<feature type="binding site" evidence="1">
    <location>
        <begin position="106"/>
        <end position="113"/>
    </location>
    <ligand>
        <name>GTP</name>
        <dbReference type="ChEBI" id="CHEBI:37565"/>
    </ligand>
</feature>
<feature type="binding site" evidence="1">
    <location>
        <begin position="186"/>
        <end position="190"/>
    </location>
    <ligand>
        <name>GTP</name>
        <dbReference type="ChEBI" id="CHEBI:37565"/>
    </ligand>
</feature>
<feature type="binding site" evidence="1">
    <location>
        <begin position="244"/>
        <end position="247"/>
    </location>
    <ligand>
        <name>GTP</name>
        <dbReference type="ChEBI" id="CHEBI:37565"/>
    </ligand>
</feature>
<organism>
    <name type="scientific">Methanobrevibacter smithii (strain ATCC 35061 / DSM 861 / OCM 144 / PS)</name>
    <dbReference type="NCBI Taxonomy" id="420247"/>
    <lineage>
        <taxon>Archaea</taxon>
        <taxon>Methanobacteriati</taxon>
        <taxon>Methanobacteriota</taxon>
        <taxon>Methanomada group</taxon>
        <taxon>Methanobacteria</taxon>
        <taxon>Methanobacteriales</taxon>
        <taxon>Methanobacteriaceae</taxon>
        <taxon>Methanobrevibacter</taxon>
    </lineage>
</organism>